<sequence length="193" mass="22285">MGKQNSKLRPEVLQDLRENTEFTDHELQEWYKGFLKDCPTGHLTVDEFKKIYANFFPYGDASKFAEHVFRTFDTNGDGTIDFREFIIALSVTSRGKLEQKLKWAFSMYDLDGNGYISRSEMLEIVQAIYKMVSSVMKMPEDESTPEKRTDKIFRQMDTNNDGKLSLEEFIKGAKSDPSIVRLLQCDPSSASQF</sequence>
<organism>
    <name type="scientific">Ovis aries</name>
    <name type="common">Sheep</name>
    <dbReference type="NCBI Taxonomy" id="9940"/>
    <lineage>
        <taxon>Eukaryota</taxon>
        <taxon>Metazoa</taxon>
        <taxon>Chordata</taxon>
        <taxon>Craniata</taxon>
        <taxon>Vertebrata</taxon>
        <taxon>Euteleostomi</taxon>
        <taxon>Mammalia</taxon>
        <taxon>Eutheria</taxon>
        <taxon>Laurasiatheria</taxon>
        <taxon>Artiodactyla</taxon>
        <taxon>Ruminantia</taxon>
        <taxon>Pecora</taxon>
        <taxon>Bovidae</taxon>
        <taxon>Caprinae</taxon>
        <taxon>Ovis</taxon>
    </lineage>
</organism>
<protein>
    <recommendedName>
        <fullName>Hippocalcin-like protein 1</fullName>
    </recommendedName>
</protein>
<proteinExistence type="evidence at transcript level"/>
<reference key="1">
    <citation type="submission" date="2008-06" db="EMBL/GenBank/DDBJ databases">
        <title>Molecular cloning and sequence analysis of HPCL1 from Black-boned sheep (Ovis aries).</title>
        <authorList>
            <person name="Miao L."/>
            <person name="Cui J."/>
            <person name="Deng W."/>
        </authorList>
    </citation>
    <scope>NUCLEOTIDE SEQUENCE [MRNA]</scope>
    <source>
        <strain>Black-boned</strain>
    </source>
</reference>
<feature type="initiator methionine" description="Removed" evidence="2">
    <location>
        <position position="1"/>
    </location>
</feature>
<feature type="chain" id="PRO_0000362076" description="Hippocalcin-like protein 1">
    <location>
        <begin position="2"/>
        <end position="193"/>
    </location>
</feature>
<feature type="domain" description="EF-hand 1" evidence="3">
    <location>
        <begin position="41"/>
        <end position="58"/>
    </location>
</feature>
<feature type="domain" description="EF-hand 2" evidence="3">
    <location>
        <begin position="60"/>
        <end position="95"/>
    </location>
</feature>
<feature type="domain" description="EF-hand 3" evidence="3">
    <location>
        <begin position="96"/>
        <end position="131"/>
    </location>
</feature>
<feature type="domain" description="EF-hand 4" evidence="3">
    <location>
        <begin position="144"/>
        <end position="179"/>
    </location>
</feature>
<feature type="binding site" evidence="3">
    <location>
        <position position="73"/>
    </location>
    <ligand>
        <name>Ca(2+)</name>
        <dbReference type="ChEBI" id="CHEBI:29108"/>
        <label>1</label>
    </ligand>
</feature>
<feature type="binding site" evidence="3">
    <location>
        <position position="75"/>
    </location>
    <ligand>
        <name>Ca(2+)</name>
        <dbReference type="ChEBI" id="CHEBI:29108"/>
        <label>1</label>
    </ligand>
</feature>
<feature type="binding site" evidence="3">
    <location>
        <position position="77"/>
    </location>
    <ligand>
        <name>Ca(2+)</name>
        <dbReference type="ChEBI" id="CHEBI:29108"/>
        <label>1</label>
    </ligand>
</feature>
<feature type="binding site" evidence="3">
    <location>
        <position position="79"/>
    </location>
    <ligand>
        <name>Ca(2+)</name>
        <dbReference type="ChEBI" id="CHEBI:29108"/>
        <label>1</label>
    </ligand>
</feature>
<feature type="binding site" evidence="3">
    <location>
        <position position="84"/>
    </location>
    <ligand>
        <name>Ca(2+)</name>
        <dbReference type="ChEBI" id="CHEBI:29108"/>
        <label>1</label>
    </ligand>
</feature>
<feature type="binding site" evidence="3">
    <location>
        <position position="109"/>
    </location>
    <ligand>
        <name>Ca(2+)</name>
        <dbReference type="ChEBI" id="CHEBI:29108"/>
        <label>2</label>
    </ligand>
</feature>
<feature type="binding site" evidence="3">
    <location>
        <position position="111"/>
    </location>
    <ligand>
        <name>Ca(2+)</name>
        <dbReference type="ChEBI" id="CHEBI:29108"/>
        <label>2</label>
    </ligand>
</feature>
<feature type="binding site" evidence="3">
    <location>
        <position position="113"/>
    </location>
    <ligand>
        <name>Ca(2+)</name>
        <dbReference type="ChEBI" id="CHEBI:29108"/>
        <label>2</label>
    </ligand>
</feature>
<feature type="binding site" evidence="3">
    <location>
        <position position="115"/>
    </location>
    <ligand>
        <name>Ca(2+)</name>
        <dbReference type="ChEBI" id="CHEBI:29108"/>
        <label>2</label>
    </ligand>
</feature>
<feature type="binding site" evidence="3">
    <location>
        <position position="120"/>
    </location>
    <ligand>
        <name>Ca(2+)</name>
        <dbReference type="ChEBI" id="CHEBI:29108"/>
        <label>2</label>
    </ligand>
</feature>
<feature type="binding site" evidence="3">
    <location>
        <position position="157"/>
    </location>
    <ligand>
        <name>Ca(2+)</name>
        <dbReference type="ChEBI" id="CHEBI:29108"/>
        <label>3</label>
    </ligand>
</feature>
<feature type="binding site" evidence="3">
    <location>
        <position position="159"/>
    </location>
    <ligand>
        <name>Ca(2+)</name>
        <dbReference type="ChEBI" id="CHEBI:29108"/>
        <label>3</label>
    </ligand>
</feature>
<feature type="binding site" evidence="3">
    <location>
        <position position="161"/>
    </location>
    <ligand>
        <name>Ca(2+)</name>
        <dbReference type="ChEBI" id="CHEBI:29108"/>
        <label>3</label>
    </ligand>
</feature>
<feature type="binding site" evidence="3">
    <location>
        <position position="163"/>
    </location>
    <ligand>
        <name>Ca(2+)</name>
        <dbReference type="ChEBI" id="CHEBI:29108"/>
        <label>3</label>
    </ligand>
</feature>
<feature type="binding site" evidence="3">
    <location>
        <position position="168"/>
    </location>
    <ligand>
        <name>Ca(2+)</name>
        <dbReference type="ChEBI" id="CHEBI:29108"/>
        <label>3</label>
    </ligand>
</feature>
<feature type="lipid moiety-binding region" description="N-myristoyl glycine" evidence="2">
    <location>
        <position position="2"/>
    </location>
</feature>
<comment type="function">
    <text evidence="1">May be involved in the calcium-dependent regulation of rhodopsin phosphorylation.</text>
</comment>
<comment type="subcellular location">
    <subcellularLocation>
        <location evidence="2">Membrane</location>
        <topology evidence="2">Lipid-anchor</topology>
    </subcellularLocation>
</comment>
<comment type="miscellaneous">
    <text evidence="1">Probably binds two or three calcium ions.</text>
</comment>
<comment type="similarity">
    <text evidence="4">Belongs to the recoverin family.</text>
</comment>
<dbReference type="EMBL" id="EU797605">
    <property type="protein sequence ID" value="ACF16971.1"/>
    <property type="molecule type" value="mRNA"/>
</dbReference>
<dbReference type="RefSeq" id="NP_001127778.1">
    <property type="nucleotide sequence ID" value="NM_001134306.1"/>
</dbReference>
<dbReference type="RefSeq" id="XP_027821522.1">
    <property type="nucleotide sequence ID" value="XM_027965721.2"/>
</dbReference>
<dbReference type="RefSeq" id="XP_027821523.1">
    <property type="nucleotide sequence ID" value="XM_027965722.3"/>
</dbReference>
<dbReference type="RefSeq" id="XP_027821524.1">
    <property type="nucleotide sequence ID" value="XM_027965723.2"/>
</dbReference>
<dbReference type="RefSeq" id="XP_042101079.1">
    <property type="nucleotide sequence ID" value="XM_042245145.1"/>
</dbReference>
<dbReference type="RefSeq" id="XP_042101080.1">
    <property type="nucleotide sequence ID" value="XM_042245146.2"/>
</dbReference>
<dbReference type="SMR" id="B3VSB7"/>
<dbReference type="STRING" id="9940.ENSOARP00000016537"/>
<dbReference type="PaxDb" id="9940-ENSOARP00000016537"/>
<dbReference type="Ensembl" id="ENSOART00020014062">
    <property type="protein sequence ID" value="ENSOARP00020011597"/>
    <property type="gene ID" value="ENSOARG00020009151"/>
</dbReference>
<dbReference type="Ensembl" id="ENSOART00180007309">
    <property type="protein sequence ID" value="ENSOARP00180003630"/>
    <property type="gene ID" value="ENSOARG00180004552"/>
</dbReference>
<dbReference type="Ensembl" id="ENSOART00185008324">
    <property type="protein sequence ID" value="ENSOARP00185004044"/>
    <property type="gene ID" value="ENSOARG00185005193"/>
</dbReference>
<dbReference type="Ensembl" id="ENSOART00215083388">
    <property type="protein sequence ID" value="ENSOARP00215046115"/>
    <property type="gene ID" value="ENSOARG00215049066"/>
</dbReference>
<dbReference type="Ensembl" id="ENSOART00220089160">
    <property type="protein sequence ID" value="ENSOARP00220047418"/>
    <property type="gene ID" value="ENSOARG00220053914"/>
</dbReference>
<dbReference type="Ensembl" id="ENSOART00225087134">
    <property type="protein sequence ID" value="ENSOARP00225045379"/>
    <property type="gene ID" value="ENSOARG00225052434"/>
</dbReference>
<dbReference type="Ensembl" id="ENSOART00260013746">
    <property type="protein sequence ID" value="ENSOARP00260006919"/>
    <property type="gene ID" value="ENSOARG00260008505"/>
</dbReference>
<dbReference type="GeneID" id="100187549"/>
<dbReference type="KEGG" id="oas:100187549"/>
<dbReference type="CTD" id="3241"/>
<dbReference type="eggNOG" id="KOG0044">
    <property type="taxonomic scope" value="Eukaryota"/>
</dbReference>
<dbReference type="OrthoDB" id="191686at2759"/>
<dbReference type="Proteomes" id="UP000002356">
    <property type="component" value="Unplaced"/>
</dbReference>
<dbReference type="GO" id="GO:0016020">
    <property type="term" value="C:membrane"/>
    <property type="evidence" value="ECO:0007669"/>
    <property type="project" value="UniProtKB-SubCell"/>
</dbReference>
<dbReference type="GO" id="GO:0005509">
    <property type="term" value="F:calcium ion binding"/>
    <property type="evidence" value="ECO:0007669"/>
    <property type="project" value="InterPro"/>
</dbReference>
<dbReference type="CDD" id="cd00051">
    <property type="entry name" value="EFh"/>
    <property type="match status" value="2"/>
</dbReference>
<dbReference type="FunFam" id="1.10.238.10:FF:000078">
    <property type="entry name" value="Hippocalcin-like 1"/>
    <property type="match status" value="1"/>
</dbReference>
<dbReference type="FunFam" id="1.10.238.10:FF:000072">
    <property type="entry name" value="Hippocalcin-like protein 1"/>
    <property type="match status" value="1"/>
</dbReference>
<dbReference type="Gene3D" id="1.10.238.10">
    <property type="entry name" value="EF-hand"/>
    <property type="match status" value="2"/>
</dbReference>
<dbReference type="InterPro" id="IPR011992">
    <property type="entry name" value="EF-hand-dom_pair"/>
</dbReference>
<dbReference type="InterPro" id="IPR018247">
    <property type="entry name" value="EF_Hand_1_Ca_BS"/>
</dbReference>
<dbReference type="InterPro" id="IPR002048">
    <property type="entry name" value="EF_hand_dom"/>
</dbReference>
<dbReference type="InterPro" id="IPR028846">
    <property type="entry name" value="Recoverin"/>
</dbReference>
<dbReference type="PANTHER" id="PTHR23055">
    <property type="entry name" value="CALCIUM BINDING PROTEINS"/>
    <property type="match status" value="1"/>
</dbReference>
<dbReference type="PANTHER" id="PTHR23055:SF79">
    <property type="entry name" value="HIPPOCALCIN-LIKE PROTEIN 1"/>
    <property type="match status" value="1"/>
</dbReference>
<dbReference type="Pfam" id="PF13499">
    <property type="entry name" value="EF-hand_7"/>
    <property type="match status" value="2"/>
</dbReference>
<dbReference type="PRINTS" id="PR00450">
    <property type="entry name" value="RECOVERIN"/>
</dbReference>
<dbReference type="SMART" id="SM00054">
    <property type="entry name" value="EFh"/>
    <property type="match status" value="3"/>
</dbReference>
<dbReference type="SUPFAM" id="SSF47473">
    <property type="entry name" value="EF-hand"/>
    <property type="match status" value="1"/>
</dbReference>
<dbReference type="PROSITE" id="PS00018">
    <property type="entry name" value="EF_HAND_1"/>
    <property type="match status" value="3"/>
</dbReference>
<dbReference type="PROSITE" id="PS50222">
    <property type="entry name" value="EF_HAND_2"/>
    <property type="match status" value="4"/>
</dbReference>
<gene>
    <name type="primary">HPCAL1</name>
</gene>
<name>HPCL1_SHEEP</name>
<keyword id="KW-0106">Calcium</keyword>
<keyword id="KW-0449">Lipoprotein</keyword>
<keyword id="KW-0472">Membrane</keyword>
<keyword id="KW-0479">Metal-binding</keyword>
<keyword id="KW-0519">Myristate</keyword>
<keyword id="KW-1185">Reference proteome</keyword>
<keyword id="KW-0677">Repeat</keyword>
<accession>B3VSB7</accession>
<evidence type="ECO:0000250" key="1"/>
<evidence type="ECO:0000250" key="2">
    <source>
        <dbReference type="UniProtKB" id="P37235"/>
    </source>
</evidence>
<evidence type="ECO:0000255" key="3">
    <source>
        <dbReference type="PROSITE-ProRule" id="PRU00448"/>
    </source>
</evidence>
<evidence type="ECO:0000305" key="4"/>